<reference key="1">
    <citation type="journal article" date="2006" name="Nat. Genet.">
        <title>The multidrug-resistant human pathogen Clostridium difficile has a highly mobile, mosaic genome.</title>
        <authorList>
            <person name="Sebaihia M."/>
            <person name="Wren B.W."/>
            <person name="Mullany P."/>
            <person name="Fairweather N.F."/>
            <person name="Minton N."/>
            <person name="Stabler R."/>
            <person name="Thomson N.R."/>
            <person name="Roberts A.P."/>
            <person name="Cerdeno-Tarraga A.M."/>
            <person name="Wang H."/>
            <person name="Holden M.T.G."/>
            <person name="Wright A."/>
            <person name="Churcher C."/>
            <person name="Quail M.A."/>
            <person name="Baker S."/>
            <person name="Bason N."/>
            <person name="Brooks K."/>
            <person name="Chillingworth T."/>
            <person name="Cronin A."/>
            <person name="Davis P."/>
            <person name="Dowd L."/>
            <person name="Fraser A."/>
            <person name="Feltwell T."/>
            <person name="Hance Z."/>
            <person name="Holroyd S."/>
            <person name="Jagels K."/>
            <person name="Moule S."/>
            <person name="Mungall K."/>
            <person name="Price C."/>
            <person name="Rabbinowitsch E."/>
            <person name="Sharp S."/>
            <person name="Simmonds M."/>
            <person name="Stevens K."/>
            <person name="Unwin L."/>
            <person name="Whithead S."/>
            <person name="Dupuy B."/>
            <person name="Dougan G."/>
            <person name="Barrell B."/>
            <person name="Parkhill J."/>
        </authorList>
    </citation>
    <scope>NUCLEOTIDE SEQUENCE [LARGE SCALE GENOMIC DNA]</scope>
    <source>
        <strain>630</strain>
    </source>
</reference>
<proteinExistence type="inferred from homology"/>
<comment type="function">
    <text evidence="1">Catalyzes the reversible isomerization of glucose-6-phosphate to fructose-6-phosphate.</text>
</comment>
<comment type="catalytic activity">
    <reaction evidence="1">
        <text>alpha-D-glucose 6-phosphate = beta-D-fructose 6-phosphate</text>
        <dbReference type="Rhea" id="RHEA:11816"/>
        <dbReference type="ChEBI" id="CHEBI:57634"/>
        <dbReference type="ChEBI" id="CHEBI:58225"/>
        <dbReference type="EC" id="5.3.1.9"/>
    </reaction>
</comment>
<comment type="pathway">
    <text evidence="1">Carbohydrate biosynthesis; gluconeogenesis.</text>
</comment>
<comment type="pathway">
    <text evidence="1">Carbohydrate degradation; glycolysis; D-glyceraldehyde 3-phosphate and glycerone phosphate from D-glucose: step 2/4.</text>
</comment>
<comment type="subcellular location">
    <subcellularLocation>
        <location evidence="1">Cytoplasm</location>
    </subcellularLocation>
</comment>
<comment type="similarity">
    <text evidence="1">Belongs to the GPI family.</text>
</comment>
<organism>
    <name type="scientific">Clostridioides difficile (strain 630)</name>
    <name type="common">Peptoclostridium difficile</name>
    <dbReference type="NCBI Taxonomy" id="272563"/>
    <lineage>
        <taxon>Bacteria</taxon>
        <taxon>Bacillati</taxon>
        <taxon>Bacillota</taxon>
        <taxon>Clostridia</taxon>
        <taxon>Peptostreptococcales</taxon>
        <taxon>Peptostreptococcaceae</taxon>
        <taxon>Clostridioides</taxon>
    </lineage>
</organism>
<accession>Q180C9</accession>
<gene>
    <name evidence="1" type="primary">pgi</name>
    <name type="ordered locus">CD630_32850</name>
</gene>
<sequence>MGKINFDYSKATEFFCQNEIDVMQPYVDVAHDMLHNKTGLGNTFLGWIDLPKNYDKEEFDRIKKSAEKIKSDSDVLLVIGIGGSYLGSRAAIDMVSHSFRNGLKKEQRKAPEVYFVGHNISSTYIMDLLDIIEGKDISVNVISKSGTTTEPALAFRIFKDYLEKKYGKEEARKRIYATTDASKGALRQLATEEGYETFVIPDDVGGRFSVLTAVGLLPIAAAGLDIDAMMKGANDAREAFQNPDLKSNDSYRYAVARTILHRKGKDVELLVNYEPQLHYVSEWWKQLYGESEGKENKGLFPASVDFSTDLHSMGQYIQDGKRLLFETVLNVENCKRNITISSEEVDLDGLNYLAGKTVDFVNHKAFEGTLLAHTDGKVPNLVINIPQLDEYNFGYLVYFFEKACGISGYLLGVNPFDQPGVEAYKKNMFALLGKPGYEKEKEELEKRLK</sequence>
<protein>
    <recommendedName>
        <fullName evidence="1">Glucose-6-phosphate isomerase</fullName>
        <shortName evidence="1">GPI</shortName>
        <ecNumber evidence="1">5.3.1.9</ecNumber>
    </recommendedName>
    <alternativeName>
        <fullName evidence="1">Phosphoglucose isomerase</fullName>
        <shortName evidence="1">PGI</shortName>
    </alternativeName>
    <alternativeName>
        <fullName evidence="1">Phosphohexose isomerase</fullName>
        <shortName evidence="1">PHI</shortName>
    </alternativeName>
</protein>
<dbReference type="EC" id="5.3.1.9" evidence="1"/>
<dbReference type="EMBL" id="AM180355">
    <property type="protein sequence ID" value="CAJ70182.1"/>
    <property type="molecule type" value="Genomic_DNA"/>
</dbReference>
<dbReference type="RefSeq" id="WP_003435635.1">
    <property type="nucleotide sequence ID" value="NZ_JAUPES010000002.1"/>
</dbReference>
<dbReference type="RefSeq" id="YP_001089801.1">
    <property type="nucleotide sequence ID" value="NC_009089.1"/>
</dbReference>
<dbReference type="SMR" id="Q180C9"/>
<dbReference type="STRING" id="272563.CD630_32850"/>
<dbReference type="EnsemblBacteria" id="CAJ70182">
    <property type="protein sequence ID" value="CAJ70182"/>
    <property type="gene ID" value="CD630_32850"/>
</dbReference>
<dbReference type="KEGG" id="cdf:CD630_32850"/>
<dbReference type="KEGG" id="pdc:CDIF630_03585"/>
<dbReference type="PATRIC" id="fig|272563.120.peg.3470"/>
<dbReference type="eggNOG" id="COG0166">
    <property type="taxonomic scope" value="Bacteria"/>
</dbReference>
<dbReference type="OrthoDB" id="140919at2"/>
<dbReference type="PhylomeDB" id="Q180C9"/>
<dbReference type="BioCyc" id="PDIF272563:G12WB-3452-MONOMER"/>
<dbReference type="UniPathway" id="UPA00109">
    <property type="reaction ID" value="UER00181"/>
</dbReference>
<dbReference type="UniPathway" id="UPA00138"/>
<dbReference type="Proteomes" id="UP000001978">
    <property type="component" value="Chromosome"/>
</dbReference>
<dbReference type="GO" id="GO:0005829">
    <property type="term" value="C:cytosol"/>
    <property type="evidence" value="ECO:0007669"/>
    <property type="project" value="TreeGrafter"/>
</dbReference>
<dbReference type="GO" id="GO:0097367">
    <property type="term" value="F:carbohydrate derivative binding"/>
    <property type="evidence" value="ECO:0007669"/>
    <property type="project" value="InterPro"/>
</dbReference>
<dbReference type="GO" id="GO:0004347">
    <property type="term" value="F:glucose-6-phosphate isomerase activity"/>
    <property type="evidence" value="ECO:0007669"/>
    <property type="project" value="UniProtKB-UniRule"/>
</dbReference>
<dbReference type="GO" id="GO:0048029">
    <property type="term" value="F:monosaccharide binding"/>
    <property type="evidence" value="ECO:0007669"/>
    <property type="project" value="TreeGrafter"/>
</dbReference>
<dbReference type="GO" id="GO:0006094">
    <property type="term" value="P:gluconeogenesis"/>
    <property type="evidence" value="ECO:0007669"/>
    <property type="project" value="UniProtKB-UniRule"/>
</dbReference>
<dbReference type="GO" id="GO:0051156">
    <property type="term" value="P:glucose 6-phosphate metabolic process"/>
    <property type="evidence" value="ECO:0007669"/>
    <property type="project" value="TreeGrafter"/>
</dbReference>
<dbReference type="GO" id="GO:0006096">
    <property type="term" value="P:glycolytic process"/>
    <property type="evidence" value="ECO:0007669"/>
    <property type="project" value="UniProtKB-UniRule"/>
</dbReference>
<dbReference type="CDD" id="cd05015">
    <property type="entry name" value="SIS_PGI_1"/>
    <property type="match status" value="1"/>
</dbReference>
<dbReference type="CDD" id="cd05016">
    <property type="entry name" value="SIS_PGI_2"/>
    <property type="match status" value="1"/>
</dbReference>
<dbReference type="FunFam" id="3.40.50.10490:FF:000015">
    <property type="entry name" value="Glucose-6-phosphate isomerase"/>
    <property type="match status" value="1"/>
</dbReference>
<dbReference type="FunFam" id="3.40.50.10490:FF:000016">
    <property type="entry name" value="Glucose-6-phosphate isomerase"/>
    <property type="match status" value="1"/>
</dbReference>
<dbReference type="Gene3D" id="3.40.50.10490">
    <property type="entry name" value="Glucose-6-phosphate isomerase like protein, domain 1"/>
    <property type="match status" value="3"/>
</dbReference>
<dbReference type="HAMAP" id="MF_00473">
    <property type="entry name" value="G6P_isomerase"/>
    <property type="match status" value="1"/>
</dbReference>
<dbReference type="InterPro" id="IPR001672">
    <property type="entry name" value="G6P_Isomerase"/>
</dbReference>
<dbReference type="InterPro" id="IPR018189">
    <property type="entry name" value="Phosphoglucose_isomerase_CS"/>
</dbReference>
<dbReference type="InterPro" id="IPR046348">
    <property type="entry name" value="SIS_dom_sf"/>
</dbReference>
<dbReference type="InterPro" id="IPR035476">
    <property type="entry name" value="SIS_PGI_1"/>
</dbReference>
<dbReference type="InterPro" id="IPR035482">
    <property type="entry name" value="SIS_PGI_2"/>
</dbReference>
<dbReference type="NCBIfam" id="NF010697">
    <property type="entry name" value="PRK14097.1"/>
    <property type="match status" value="1"/>
</dbReference>
<dbReference type="PANTHER" id="PTHR11469">
    <property type="entry name" value="GLUCOSE-6-PHOSPHATE ISOMERASE"/>
    <property type="match status" value="1"/>
</dbReference>
<dbReference type="PANTHER" id="PTHR11469:SF1">
    <property type="entry name" value="GLUCOSE-6-PHOSPHATE ISOMERASE"/>
    <property type="match status" value="1"/>
</dbReference>
<dbReference type="Pfam" id="PF00342">
    <property type="entry name" value="PGI"/>
    <property type="match status" value="1"/>
</dbReference>
<dbReference type="PRINTS" id="PR00662">
    <property type="entry name" value="G6PISOMERASE"/>
</dbReference>
<dbReference type="SUPFAM" id="SSF53697">
    <property type="entry name" value="SIS domain"/>
    <property type="match status" value="1"/>
</dbReference>
<dbReference type="PROSITE" id="PS00765">
    <property type="entry name" value="P_GLUCOSE_ISOMERASE_1"/>
    <property type="match status" value="1"/>
</dbReference>
<dbReference type="PROSITE" id="PS00174">
    <property type="entry name" value="P_GLUCOSE_ISOMERASE_2"/>
    <property type="match status" value="1"/>
</dbReference>
<dbReference type="PROSITE" id="PS51463">
    <property type="entry name" value="P_GLUCOSE_ISOMERASE_3"/>
    <property type="match status" value="1"/>
</dbReference>
<feature type="chain" id="PRO_1000013956" description="Glucose-6-phosphate isomerase">
    <location>
        <begin position="1"/>
        <end position="449"/>
    </location>
</feature>
<feature type="active site" description="Proton donor" evidence="1">
    <location>
        <position position="290"/>
    </location>
</feature>
<feature type="active site" evidence="1">
    <location>
        <position position="311"/>
    </location>
</feature>
<feature type="active site" evidence="1">
    <location>
        <position position="425"/>
    </location>
</feature>
<evidence type="ECO:0000255" key="1">
    <source>
        <dbReference type="HAMAP-Rule" id="MF_00473"/>
    </source>
</evidence>
<name>G6PI_CLOD6</name>
<keyword id="KW-0963">Cytoplasm</keyword>
<keyword id="KW-0312">Gluconeogenesis</keyword>
<keyword id="KW-0324">Glycolysis</keyword>
<keyword id="KW-0413">Isomerase</keyword>
<keyword id="KW-1185">Reference proteome</keyword>